<comment type="function">
    <text evidence="1">Forms part of the ribosomal stalk, playing a central role in the interaction of the ribosome with GTP-bound translation factors.</text>
</comment>
<comment type="subunit">
    <text evidence="1">Part of the ribosomal stalk of the 50S ribosomal subunit. The N-terminus interacts with L11 and the large rRNA to form the base of the stalk. The C-terminus forms an elongated spine to which L12 dimers bind in a sequential fashion forming a multimeric L10(L12)X complex.</text>
</comment>
<comment type="similarity">
    <text evidence="1">Belongs to the universal ribosomal protein uL10 family.</text>
</comment>
<proteinExistence type="inferred from homology"/>
<dbReference type="EMBL" id="CP000802">
    <property type="protein sequence ID" value="ABV08388.1"/>
    <property type="molecule type" value="Genomic_DNA"/>
</dbReference>
<dbReference type="RefSeq" id="WP_001207201.1">
    <property type="nucleotide sequence ID" value="NC_009800.1"/>
</dbReference>
<dbReference type="SMR" id="A8A784"/>
<dbReference type="GeneID" id="93777909"/>
<dbReference type="KEGG" id="ecx:EcHS_A4218"/>
<dbReference type="HOGENOM" id="CLU_092227_0_2_6"/>
<dbReference type="GO" id="GO:0015934">
    <property type="term" value="C:large ribosomal subunit"/>
    <property type="evidence" value="ECO:0007669"/>
    <property type="project" value="InterPro"/>
</dbReference>
<dbReference type="GO" id="GO:0070180">
    <property type="term" value="F:large ribosomal subunit rRNA binding"/>
    <property type="evidence" value="ECO:0007669"/>
    <property type="project" value="UniProtKB-UniRule"/>
</dbReference>
<dbReference type="GO" id="GO:0003735">
    <property type="term" value="F:structural constituent of ribosome"/>
    <property type="evidence" value="ECO:0007669"/>
    <property type="project" value="InterPro"/>
</dbReference>
<dbReference type="GO" id="GO:0006412">
    <property type="term" value="P:translation"/>
    <property type="evidence" value="ECO:0007669"/>
    <property type="project" value="UniProtKB-UniRule"/>
</dbReference>
<dbReference type="CDD" id="cd05797">
    <property type="entry name" value="Ribosomal_L10"/>
    <property type="match status" value="1"/>
</dbReference>
<dbReference type="FunFam" id="3.30.70.1730:FF:000001">
    <property type="entry name" value="50S ribosomal protein L10"/>
    <property type="match status" value="1"/>
</dbReference>
<dbReference type="Gene3D" id="3.30.70.1730">
    <property type="match status" value="1"/>
</dbReference>
<dbReference type="Gene3D" id="6.10.250.2350">
    <property type="match status" value="1"/>
</dbReference>
<dbReference type="HAMAP" id="MF_00362">
    <property type="entry name" value="Ribosomal_uL10"/>
    <property type="match status" value="1"/>
</dbReference>
<dbReference type="InterPro" id="IPR001790">
    <property type="entry name" value="Ribosomal_uL10"/>
</dbReference>
<dbReference type="InterPro" id="IPR043141">
    <property type="entry name" value="Ribosomal_uL10-like_sf"/>
</dbReference>
<dbReference type="InterPro" id="IPR022973">
    <property type="entry name" value="Ribosomal_uL10_bac"/>
</dbReference>
<dbReference type="InterPro" id="IPR047865">
    <property type="entry name" value="Ribosomal_uL10_bac_type"/>
</dbReference>
<dbReference type="InterPro" id="IPR002363">
    <property type="entry name" value="Ribosomal_uL10_CS_bac"/>
</dbReference>
<dbReference type="NCBIfam" id="NF000955">
    <property type="entry name" value="PRK00099.1-1"/>
    <property type="match status" value="1"/>
</dbReference>
<dbReference type="PANTHER" id="PTHR11560">
    <property type="entry name" value="39S RIBOSOMAL PROTEIN L10, MITOCHONDRIAL"/>
    <property type="match status" value="1"/>
</dbReference>
<dbReference type="Pfam" id="PF00466">
    <property type="entry name" value="Ribosomal_L10"/>
    <property type="match status" value="1"/>
</dbReference>
<dbReference type="SUPFAM" id="SSF160369">
    <property type="entry name" value="Ribosomal protein L10-like"/>
    <property type="match status" value="1"/>
</dbReference>
<dbReference type="PROSITE" id="PS01109">
    <property type="entry name" value="RIBOSOMAL_L10"/>
    <property type="match status" value="1"/>
</dbReference>
<accession>A8A784</accession>
<protein>
    <recommendedName>
        <fullName evidence="1">Large ribosomal subunit protein uL10</fullName>
    </recommendedName>
    <alternativeName>
        <fullName evidence="2">50S ribosomal protein L10</fullName>
    </alternativeName>
</protein>
<name>RL10_ECOHS</name>
<gene>
    <name evidence="1" type="primary">rplJ</name>
    <name type="ordered locus">EcHS_A4218</name>
</gene>
<organism>
    <name type="scientific">Escherichia coli O9:H4 (strain HS)</name>
    <dbReference type="NCBI Taxonomy" id="331112"/>
    <lineage>
        <taxon>Bacteria</taxon>
        <taxon>Pseudomonadati</taxon>
        <taxon>Pseudomonadota</taxon>
        <taxon>Gammaproteobacteria</taxon>
        <taxon>Enterobacterales</taxon>
        <taxon>Enterobacteriaceae</taxon>
        <taxon>Escherichia</taxon>
    </lineage>
</organism>
<reference key="1">
    <citation type="journal article" date="2008" name="J. Bacteriol.">
        <title>The pangenome structure of Escherichia coli: comparative genomic analysis of E. coli commensal and pathogenic isolates.</title>
        <authorList>
            <person name="Rasko D.A."/>
            <person name="Rosovitz M.J."/>
            <person name="Myers G.S.A."/>
            <person name="Mongodin E.F."/>
            <person name="Fricke W.F."/>
            <person name="Gajer P."/>
            <person name="Crabtree J."/>
            <person name="Sebaihia M."/>
            <person name="Thomson N.R."/>
            <person name="Chaudhuri R."/>
            <person name="Henderson I.R."/>
            <person name="Sperandio V."/>
            <person name="Ravel J."/>
        </authorList>
    </citation>
    <scope>NUCLEOTIDE SEQUENCE [LARGE SCALE GENOMIC DNA]</scope>
    <source>
        <strain>HS</strain>
    </source>
</reference>
<evidence type="ECO:0000255" key="1">
    <source>
        <dbReference type="HAMAP-Rule" id="MF_00362"/>
    </source>
</evidence>
<evidence type="ECO:0000305" key="2"/>
<feature type="chain" id="PRO_1000059887" description="Large ribosomal subunit protein uL10">
    <location>
        <begin position="1"/>
        <end position="165"/>
    </location>
</feature>
<feature type="modified residue" description="N6-acetyllysine" evidence="1">
    <location>
        <position position="37"/>
    </location>
</feature>
<feature type="modified residue" description="N6-acetyllysine" evidence="1">
    <location>
        <position position="105"/>
    </location>
</feature>
<keyword id="KW-0007">Acetylation</keyword>
<keyword id="KW-0687">Ribonucleoprotein</keyword>
<keyword id="KW-0689">Ribosomal protein</keyword>
<keyword id="KW-0694">RNA-binding</keyword>
<keyword id="KW-0699">rRNA-binding</keyword>
<sequence>MALNLQDKQAIVAEVSEVAKGALSAVVADSRGVTVDKMTELRKAGREAGVYMRVVRNTLLRRAVEGTPFECLKDAFVGPTLIAYSMEHPGAAARLFKEFAKANAKFEVKAAAFEGELIPASQIDRLATLPTYEEAIARLMATMKEASAGKLVRTLAAVRDAKEAA</sequence>